<gene>
    <name type="primary">Gcnt4</name>
</gene>
<reference key="1">
    <citation type="journal article" date="2009" name="PLoS Biol.">
        <title>Lineage-specific biology revealed by a finished genome assembly of the mouse.</title>
        <authorList>
            <person name="Church D.M."/>
            <person name="Goodstadt L."/>
            <person name="Hillier L.W."/>
            <person name="Zody M.C."/>
            <person name="Goldstein S."/>
            <person name="She X."/>
            <person name="Bult C.J."/>
            <person name="Agarwala R."/>
            <person name="Cherry J.L."/>
            <person name="DiCuccio M."/>
            <person name="Hlavina W."/>
            <person name="Kapustin Y."/>
            <person name="Meric P."/>
            <person name="Maglott D."/>
            <person name="Birtle Z."/>
            <person name="Marques A.C."/>
            <person name="Graves T."/>
            <person name="Zhou S."/>
            <person name="Teague B."/>
            <person name="Potamousis K."/>
            <person name="Churas C."/>
            <person name="Place M."/>
            <person name="Herschleb J."/>
            <person name="Runnheim R."/>
            <person name="Forrest D."/>
            <person name="Amos-Landgraf J."/>
            <person name="Schwartz D.C."/>
            <person name="Cheng Z."/>
            <person name="Lindblad-Toh K."/>
            <person name="Eichler E.E."/>
            <person name="Ponting C.P."/>
        </authorList>
    </citation>
    <scope>NUCLEOTIDE SEQUENCE [LARGE SCALE GENOMIC DNA]</scope>
    <source>
        <strain>C57BL/6J</strain>
    </source>
</reference>
<proteinExistence type="inferred from homology"/>
<comment type="function">
    <text evidence="2">Glycosyltransferase that mediates core 2 O-glycan branching, an important step in mucin-type biosynthesis. Does not have core 4 O-glycan or I-branching enzyme activity.</text>
</comment>
<comment type="catalytic activity">
    <reaction evidence="2">
        <text>a 3-O-[beta-D-galactosyl-(1-&gt;3)-N-acetyl-alpha-D-galactosaminyl]-L-seryl-[protein] + UDP-N-acetyl-alpha-D-glucosamine = 3-O-{beta-D-galactosyl-(1-&gt;3)-[N-acetyl-beta-D-glucosaminyl-(1-&gt;6)]-N-acetyl-alpha-D-galactosaminyl}-L-seryl-[protein] + UDP + H(+)</text>
        <dbReference type="Rhea" id="RHEA:56212"/>
        <dbReference type="Rhea" id="RHEA-COMP:13922"/>
        <dbReference type="Rhea" id="RHEA-COMP:14419"/>
        <dbReference type="ChEBI" id="CHEBI:15378"/>
        <dbReference type="ChEBI" id="CHEBI:57705"/>
        <dbReference type="ChEBI" id="CHEBI:58223"/>
        <dbReference type="ChEBI" id="CHEBI:137949"/>
        <dbReference type="ChEBI" id="CHEBI:139605"/>
        <dbReference type="EC" id="2.4.1.102"/>
    </reaction>
</comment>
<comment type="catalytic activity">
    <reaction evidence="2">
        <text>a 3-O-[beta-D-galactosyl-(1-&gt;3)-N-acetyl-alpha-D-galactosaminyl]-L-threonyl-[protein] + UDP-N-acetyl-alpha-D-glucosamine = a 3-O-{beta-D-galactosyl-(1-&gt;3)-[N-acetyl-beta-D-glucosaminyl-(1-&gt;6)]-N-acetyl-alpha-D-galactosaminyl}-L-threonyl-[protein] + UDP + H(+)</text>
        <dbReference type="Rhea" id="RHEA:56216"/>
        <dbReference type="Rhea" id="RHEA-COMP:13923"/>
        <dbReference type="Rhea" id="RHEA-COMP:14420"/>
        <dbReference type="ChEBI" id="CHEBI:15378"/>
        <dbReference type="ChEBI" id="CHEBI:57705"/>
        <dbReference type="ChEBI" id="CHEBI:58223"/>
        <dbReference type="ChEBI" id="CHEBI:137950"/>
        <dbReference type="ChEBI" id="CHEBI:139607"/>
        <dbReference type="EC" id="2.4.1.102"/>
    </reaction>
</comment>
<comment type="pathway">
    <text>Protein modification; protein glycosylation.</text>
</comment>
<comment type="subcellular location">
    <subcellularLocation>
        <location evidence="1">Golgi apparatus membrane</location>
        <topology evidence="1">Single-pass type II membrane protein</topology>
    </subcellularLocation>
</comment>
<comment type="similarity">
    <text evidence="4">Belongs to the glycosyltransferase 14 family.</text>
</comment>
<sequence>MKIFRCCFKYTLQQKLFILLLTLWLFSLLKLLNVGRLLFPQRDIYLVEYSLSTSPFVRNRFPESGDAARDNVNCSGVYEHEPLEIGKSLEIRRRSIIDLEDGDVVAMTSDCDVYQTLRQYHEKLVSREEEDFPIAYSLVVHKDAIMVERLIRAIYNQHNLYCIHYDLKSPDTFKAAMNNLAKCFPNIFIASKLETVEYAHISRLQADWNCLSDLLKSSVQWKYVINLCGQDFPLKSNFELVTELKSLQGRNMLETVRPPSAKTERFTYHHELRQVPYDYMKLPVKTNVSKGAPPHNIQVFVGSAYFVLSRAFVKYIFNSSLVEDFFAWSKDTYSPDEHFWATLIRIPGIPGGISSSSQDVSDLQSKTRLVKWFYYEGFLYPNCTGSHLRSVCIYGAAELRWLLNEGHWFANKFDSKVDPILMKCLAEKLEEQQRKLIALSSEKFMTEGTRQSHTL</sequence>
<accession>E9Q649</accession>
<organism>
    <name type="scientific">Mus musculus</name>
    <name type="common">Mouse</name>
    <dbReference type="NCBI Taxonomy" id="10090"/>
    <lineage>
        <taxon>Eukaryota</taxon>
        <taxon>Metazoa</taxon>
        <taxon>Chordata</taxon>
        <taxon>Craniata</taxon>
        <taxon>Vertebrata</taxon>
        <taxon>Euteleostomi</taxon>
        <taxon>Mammalia</taxon>
        <taxon>Eutheria</taxon>
        <taxon>Euarchontoglires</taxon>
        <taxon>Glires</taxon>
        <taxon>Rodentia</taxon>
        <taxon>Myomorpha</taxon>
        <taxon>Muroidea</taxon>
        <taxon>Muridae</taxon>
        <taxon>Murinae</taxon>
        <taxon>Mus</taxon>
        <taxon>Mus</taxon>
    </lineage>
</organism>
<name>GCNT4_MOUSE</name>
<keyword id="KW-1015">Disulfide bond</keyword>
<keyword id="KW-0325">Glycoprotein</keyword>
<keyword id="KW-0328">Glycosyltransferase</keyword>
<keyword id="KW-0333">Golgi apparatus</keyword>
<keyword id="KW-0472">Membrane</keyword>
<keyword id="KW-1185">Reference proteome</keyword>
<keyword id="KW-0735">Signal-anchor</keyword>
<keyword id="KW-0808">Transferase</keyword>
<keyword id="KW-0812">Transmembrane</keyword>
<keyword id="KW-1133">Transmembrane helix</keyword>
<dbReference type="EC" id="2.4.1.102" evidence="2"/>
<dbReference type="EMBL" id="AC174082">
    <property type="status" value="NOT_ANNOTATED_CDS"/>
    <property type="molecule type" value="Genomic_DNA"/>
</dbReference>
<dbReference type="CCDS" id="CCDS49336.1"/>
<dbReference type="RefSeq" id="NP_001159537.1">
    <property type="nucleotide sequence ID" value="NM_001166065.2"/>
</dbReference>
<dbReference type="RefSeq" id="NP_001363928.1">
    <property type="nucleotide sequence ID" value="NM_001376999.1"/>
</dbReference>
<dbReference type="RefSeq" id="XP_006517659.1">
    <property type="nucleotide sequence ID" value="XM_006517596.5"/>
</dbReference>
<dbReference type="RefSeq" id="XP_006517660.1">
    <property type="nucleotide sequence ID" value="XM_006517597.3"/>
</dbReference>
<dbReference type="RefSeq" id="XP_006517661.1">
    <property type="nucleotide sequence ID" value="XM_006517598.3"/>
</dbReference>
<dbReference type="RefSeq" id="XP_006517662.1">
    <property type="nucleotide sequence ID" value="XM_006517599.2"/>
</dbReference>
<dbReference type="RefSeq" id="XP_006517663.1">
    <property type="nucleotide sequence ID" value="XM_006517600.2"/>
</dbReference>
<dbReference type="RefSeq" id="XP_006517664.1">
    <property type="nucleotide sequence ID" value="XM_006517601.4"/>
</dbReference>
<dbReference type="SMR" id="E9Q649"/>
<dbReference type="BioGRID" id="230036">
    <property type="interactions" value="1"/>
</dbReference>
<dbReference type="FunCoup" id="E9Q649">
    <property type="interactions" value="35"/>
</dbReference>
<dbReference type="STRING" id="10090.ENSMUSP00000130496"/>
<dbReference type="GlyCosmos" id="E9Q649">
    <property type="glycosylation" value="3 sites, No reported glycans"/>
</dbReference>
<dbReference type="GlyGen" id="E9Q649">
    <property type="glycosylation" value="3 sites, 1 N-linked glycan (1 site)"/>
</dbReference>
<dbReference type="PhosphoSitePlus" id="E9Q649"/>
<dbReference type="SwissPalm" id="E9Q649"/>
<dbReference type="PaxDb" id="10090-ENSMUSP00000130496"/>
<dbReference type="ProteomicsDB" id="273429"/>
<dbReference type="Pumba" id="E9Q649"/>
<dbReference type="Antibodypedia" id="24369">
    <property type="antibodies" value="73 antibodies from 20 providers"/>
</dbReference>
<dbReference type="Ensembl" id="ENSMUST00000171324.3">
    <property type="protein sequence ID" value="ENSMUSP00000130496.2"/>
    <property type="gene ID" value="ENSMUSG00000091387.3"/>
</dbReference>
<dbReference type="GeneID" id="218476"/>
<dbReference type="KEGG" id="mmu:218476"/>
<dbReference type="UCSC" id="uc007rno.2">
    <property type="organism name" value="mouse"/>
</dbReference>
<dbReference type="AGR" id="MGI:2684919"/>
<dbReference type="CTD" id="51301"/>
<dbReference type="MGI" id="MGI:2684919">
    <property type="gene designation" value="Gcnt4"/>
</dbReference>
<dbReference type="VEuPathDB" id="HostDB:ENSMUSG00000091387"/>
<dbReference type="eggNOG" id="KOG0799">
    <property type="taxonomic scope" value="Eukaryota"/>
</dbReference>
<dbReference type="GeneTree" id="ENSGT00940000159721"/>
<dbReference type="HOGENOM" id="CLU_032341_1_2_1"/>
<dbReference type="InParanoid" id="E9Q649"/>
<dbReference type="OMA" id="SVEYAHI"/>
<dbReference type="OrthoDB" id="2019572at2759"/>
<dbReference type="PhylomeDB" id="E9Q649"/>
<dbReference type="TreeFam" id="TF315534"/>
<dbReference type="Reactome" id="R-MMU-913709">
    <property type="pathway name" value="O-linked glycosylation of mucins"/>
</dbReference>
<dbReference type="UniPathway" id="UPA00378"/>
<dbReference type="BioGRID-ORCS" id="218476">
    <property type="hits" value="1 hit in 76 CRISPR screens"/>
</dbReference>
<dbReference type="PRO" id="PR:E9Q649"/>
<dbReference type="Proteomes" id="UP000000589">
    <property type="component" value="Chromosome 13"/>
</dbReference>
<dbReference type="RNAct" id="E9Q649">
    <property type="molecule type" value="protein"/>
</dbReference>
<dbReference type="Bgee" id="ENSMUSG00000091387">
    <property type="expression patterns" value="Expressed in secondary oocyte and 40 other cell types or tissues"/>
</dbReference>
<dbReference type="GO" id="GO:0000139">
    <property type="term" value="C:Golgi membrane"/>
    <property type="evidence" value="ECO:0007669"/>
    <property type="project" value="UniProtKB-SubCell"/>
</dbReference>
<dbReference type="GO" id="GO:0003829">
    <property type="term" value="F:beta-1,3-galactosyl-O-glycosyl-glycoprotein beta-1,6-N-acetylglucosaminyltransferase activity"/>
    <property type="evidence" value="ECO:0007669"/>
    <property type="project" value="UniProtKB-EC"/>
</dbReference>
<dbReference type="GO" id="GO:0002121">
    <property type="term" value="P:inter-male aggressive behavior"/>
    <property type="evidence" value="ECO:0000315"/>
    <property type="project" value="MGI"/>
</dbReference>
<dbReference type="GO" id="GO:0060993">
    <property type="term" value="P:kidney morphogenesis"/>
    <property type="evidence" value="ECO:0000316"/>
    <property type="project" value="MGI"/>
</dbReference>
<dbReference type="GO" id="GO:0001780">
    <property type="term" value="P:neutrophil homeostasis"/>
    <property type="evidence" value="ECO:0000315"/>
    <property type="project" value="MGI"/>
</dbReference>
<dbReference type="GO" id="GO:0006486">
    <property type="term" value="P:protein glycosylation"/>
    <property type="evidence" value="ECO:0007669"/>
    <property type="project" value="UniProtKB-UniPathway"/>
</dbReference>
<dbReference type="GO" id="GO:0042403">
    <property type="term" value="P:thyroid hormone metabolic process"/>
    <property type="evidence" value="ECO:0000315"/>
    <property type="project" value="MGI"/>
</dbReference>
<dbReference type="GO" id="GO:0048729">
    <property type="term" value="P:tissue morphogenesis"/>
    <property type="evidence" value="ECO:0000315"/>
    <property type="project" value="MGI"/>
</dbReference>
<dbReference type="InterPro" id="IPR003406">
    <property type="entry name" value="Glyco_trans_14"/>
</dbReference>
<dbReference type="PANTHER" id="PTHR19297:SF7">
    <property type="entry name" value="BETA-1,3-GALACTOSYL-O-GLYCOSYL-GLYCOPROTEIN BETA-1,6-N-ACETYLGLUCOSAMINYLTRANSFERASE 4"/>
    <property type="match status" value="1"/>
</dbReference>
<dbReference type="PANTHER" id="PTHR19297">
    <property type="entry name" value="GLYCOSYLTRANSFERASE 14 FAMILY MEMBER"/>
    <property type="match status" value="1"/>
</dbReference>
<dbReference type="Pfam" id="PF02485">
    <property type="entry name" value="Branch"/>
    <property type="match status" value="1"/>
</dbReference>
<protein>
    <recommendedName>
        <fullName>Beta-1,3-galactosyl-O-glycosyl-glycoprotein beta-1,6-N-acetylglucosaminyltransferase 4</fullName>
        <ecNumber evidence="2">2.4.1.102</ecNumber>
    </recommendedName>
    <alternativeName>
        <fullName>Core 2-branching enzyme 3</fullName>
    </alternativeName>
    <alternativeName>
        <fullName>Core2-GlcNAc-transferase 3</fullName>
        <shortName>C2GnT3</shortName>
    </alternativeName>
</protein>
<feature type="chain" id="PRO_0000415825" description="Beta-1,3-galactosyl-O-glycosyl-glycoprotein beta-1,6-N-acetylglucosaminyltransferase 4">
    <location>
        <begin position="1"/>
        <end position="455"/>
    </location>
</feature>
<feature type="topological domain" description="Cytoplasmic" evidence="3">
    <location>
        <begin position="1"/>
        <end position="13"/>
    </location>
</feature>
<feature type="transmembrane region" description="Helical; Signal-anchor for type II membrane protein" evidence="3">
    <location>
        <begin position="14"/>
        <end position="34"/>
    </location>
</feature>
<feature type="topological domain" description="Lumenal" evidence="3">
    <location>
        <begin position="35"/>
        <end position="455"/>
    </location>
</feature>
<feature type="glycosylation site" description="N-linked (GlcNAc...) asparagine" evidence="3">
    <location>
        <position position="73"/>
    </location>
</feature>
<feature type="glycosylation site" description="N-linked (GlcNAc...) asparagine" evidence="3">
    <location>
        <position position="287"/>
    </location>
</feature>
<feature type="glycosylation site" description="N-linked (GlcNAc...) asparagine" evidence="3">
    <location>
        <position position="382"/>
    </location>
</feature>
<feature type="disulfide bond" evidence="1">
    <location>
        <begin position="74"/>
        <end position="228"/>
    </location>
</feature>
<feature type="disulfide bond" evidence="1">
    <location>
        <begin position="162"/>
        <end position="383"/>
    </location>
</feature>
<feature type="disulfide bond" evidence="1">
    <location>
        <begin position="183"/>
        <end position="210"/>
    </location>
</feature>
<feature type="disulfide bond" evidence="1">
    <location>
        <begin position="392"/>
        <end position="424"/>
    </location>
</feature>
<evidence type="ECO:0000250" key="1"/>
<evidence type="ECO:0000250" key="2">
    <source>
        <dbReference type="UniProtKB" id="Q9P109"/>
    </source>
</evidence>
<evidence type="ECO:0000255" key="3"/>
<evidence type="ECO:0000305" key="4"/>